<dbReference type="EMBL" id="AC009999">
    <property type="protein sequence ID" value="AAF29400.1"/>
    <property type="status" value="ALT_SEQ"/>
    <property type="molecule type" value="Genomic_DNA"/>
</dbReference>
<dbReference type="EMBL" id="CP002684">
    <property type="protein sequence ID" value="AEE27920.1"/>
    <property type="molecule type" value="Genomic_DNA"/>
</dbReference>
<dbReference type="PIR" id="D86194">
    <property type="entry name" value="D86194"/>
</dbReference>
<dbReference type="RefSeq" id="NP_172084.2">
    <property type="nucleotide sequence ID" value="NM_100474.2"/>
</dbReference>
<dbReference type="PaxDb" id="3702-AT1G05930.1"/>
<dbReference type="EnsemblPlants" id="AT1G05930.1">
    <property type="protein sequence ID" value="AT1G05930.1"/>
    <property type="gene ID" value="AT1G05930"/>
</dbReference>
<dbReference type="GeneID" id="837103"/>
<dbReference type="Gramene" id="AT1G05930.1">
    <property type="protein sequence ID" value="AT1G05930.1"/>
    <property type="gene ID" value="AT1G05930"/>
</dbReference>
<dbReference type="KEGG" id="ath:AT1G05930"/>
<dbReference type="Araport" id="AT1G05930"/>
<dbReference type="TAIR" id="AT1G05930"/>
<dbReference type="HOGENOM" id="CLU_072178_0_0_1"/>
<dbReference type="InParanoid" id="Q9MA32"/>
<dbReference type="OMA" id="NFENPNG"/>
<dbReference type="PhylomeDB" id="Q9MA32"/>
<dbReference type="PRO" id="PR:Q9MA32"/>
<dbReference type="Proteomes" id="UP000006548">
    <property type="component" value="Chromosome 1"/>
</dbReference>
<dbReference type="ExpressionAtlas" id="Q9MA32">
    <property type="expression patterns" value="baseline and differential"/>
</dbReference>
<dbReference type="GO" id="GO:0005634">
    <property type="term" value="C:nucleus"/>
    <property type="evidence" value="ECO:0007669"/>
    <property type="project" value="UniProtKB-SubCell"/>
</dbReference>
<dbReference type="GO" id="GO:0003677">
    <property type="term" value="F:DNA binding"/>
    <property type="evidence" value="ECO:0007669"/>
    <property type="project" value="UniProtKB-KW"/>
</dbReference>
<dbReference type="CDD" id="cd10017">
    <property type="entry name" value="B3_DNA"/>
    <property type="match status" value="1"/>
</dbReference>
<dbReference type="Gene3D" id="2.40.330.10">
    <property type="entry name" value="DNA-binding pseudobarrel domain"/>
    <property type="match status" value="1"/>
</dbReference>
<dbReference type="InterPro" id="IPR005508">
    <property type="entry name" value="At2g31720-like"/>
</dbReference>
<dbReference type="InterPro" id="IPR003340">
    <property type="entry name" value="B3_DNA-bd"/>
</dbReference>
<dbReference type="InterPro" id="IPR015300">
    <property type="entry name" value="DNA-bd_pseudobarrel_sf"/>
</dbReference>
<dbReference type="PANTHER" id="PTHR31541">
    <property type="entry name" value="B3 DOMAIN PLANT PROTEIN-RELATED"/>
    <property type="match status" value="1"/>
</dbReference>
<dbReference type="PANTHER" id="PTHR31541:SF34">
    <property type="entry name" value="TF-B3 DOMAIN-CONTAINING PROTEIN"/>
    <property type="match status" value="1"/>
</dbReference>
<dbReference type="Pfam" id="PF03754">
    <property type="entry name" value="At2g31720-like"/>
    <property type="match status" value="1"/>
</dbReference>
<dbReference type="SMART" id="SM01019">
    <property type="entry name" value="B3"/>
    <property type="match status" value="1"/>
</dbReference>
<dbReference type="SUPFAM" id="SSF101936">
    <property type="entry name" value="DNA-binding pseudobarrel domain"/>
    <property type="match status" value="1"/>
</dbReference>
<dbReference type="PROSITE" id="PS50863">
    <property type="entry name" value="B3"/>
    <property type="match status" value="1"/>
</dbReference>
<evidence type="ECO:0000255" key="1">
    <source>
        <dbReference type="PROSITE-ProRule" id="PRU00326"/>
    </source>
</evidence>
<evidence type="ECO:0000305" key="2"/>
<comment type="subcellular location">
    <subcellularLocation>
        <location evidence="1">Nucleus</location>
    </subcellularLocation>
</comment>
<comment type="sequence caution" evidence="2">
    <conflict type="erroneous gene model prediction">
        <sequence resource="EMBL-CDS" id="AAF29400"/>
    </conflict>
</comment>
<sequence length="318" mass="37356">MTTNDDDHAAERNTMSMNYELAATLSDEEQRARKGKAKIVCKEEDHVFIKKKEKYEEESEKREFFSHVPRKIRPALRYPQPNFENPNGASSSLNLPFEEDYYMAEYYKKTETINPPNPYHQWSPSSFLTEYTHPRMLEVLHRCGFNRPVVTCYSRTAREMRWWLRQVMKDMRAEDLTLILEKTLSTTDVITTTHGRFSMHFNRLISNDFLKPEERSILEEDTYNDETMGVGAILVDQRSQKWSVILKRWGQNYFLSCGWNDVVKANKLKAGDDICLWAFRCDGVLCFAMRQWRGILCFALVPPLTLRQSSSSNARRLC</sequence>
<keyword id="KW-0238">DNA-binding</keyword>
<keyword id="KW-0539">Nucleus</keyword>
<keyword id="KW-1185">Reference proteome</keyword>
<keyword id="KW-0804">Transcription</keyword>
<keyword id="KW-0805">Transcription regulation</keyword>
<proteinExistence type="evidence at transcript level"/>
<gene>
    <name type="ordered locus">At1g05930</name>
    <name type="ORF">T20M3.21</name>
</gene>
<protein>
    <recommendedName>
        <fullName>B3 domain-containing protein At1g05930</fullName>
    </recommendedName>
</protein>
<accession>Q9MA32</accession>
<feature type="chain" id="PRO_0000375126" description="B3 domain-containing protein At1g05930">
    <location>
        <begin position="1"/>
        <end position="318"/>
    </location>
</feature>
<feature type="DNA-binding region" description="TF-B3" evidence="1">
    <location>
        <begin position="201"/>
        <end position="293"/>
    </location>
</feature>
<name>Y1593_ARATH</name>
<organism>
    <name type="scientific">Arabidopsis thaliana</name>
    <name type="common">Mouse-ear cress</name>
    <dbReference type="NCBI Taxonomy" id="3702"/>
    <lineage>
        <taxon>Eukaryota</taxon>
        <taxon>Viridiplantae</taxon>
        <taxon>Streptophyta</taxon>
        <taxon>Embryophyta</taxon>
        <taxon>Tracheophyta</taxon>
        <taxon>Spermatophyta</taxon>
        <taxon>Magnoliopsida</taxon>
        <taxon>eudicotyledons</taxon>
        <taxon>Gunneridae</taxon>
        <taxon>Pentapetalae</taxon>
        <taxon>rosids</taxon>
        <taxon>malvids</taxon>
        <taxon>Brassicales</taxon>
        <taxon>Brassicaceae</taxon>
        <taxon>Camelineae</taxon>
        <taxon>Arabidopsis</taxon>
    </lineage>
</organism>
<reference key="1">
    <citation type="journal article" date="2000" name="Nature">
        <title>Sequence and analysis of chromosome 1 of the plant Arabidopsis thaliana.</title>
        <authorList>
            <person name="Theologis A."/>
            <person name="Ecker J.R."/>
            <person name="Palm C.J."/>
            <person name="Federspiel N.A."/>
            <person name="Kaul S."/>
            <person name="White O."/>
            <person name="Alonso J."/>
            <person name="Altafi H."/>
            <person name="Araujo R."/>
            <person name="Bowman C.L."/>
            <person name="Brooks S.Y."/>
            <person name="Buehler E."/>
            <person name="Chan A."/>
            <person name="Chao Q."/>
            <person name="Chen H."/>
            <person name="Cheuk R.F."/>
            <person name="Chin C.W."/>
            <person name="Chung M.K."/>
            <person name="Conn L."/>
            <person name="Conway A.B."/>
            <person name="Conway A.R."/>
            <person name="Creasy T.H."/>
            <person name="Dewar K."/>
            <person name="Dunn P."/>
            <person name="Etgu P."/>
            <person name="Feldblyum T.V."/>
            <person name="Feng J.-D."/>
            <person name="Fong B."/>
            <person name="Fujii C.Y."/>
            <person name="Gill J.E."/>
            <person name="Goldsmith A.D."/>
            <person name="Haas B."/>
            <person name="Hansen N.F."/>
            <person name="Hughes B."/>
            <person name="Huizar L."/>
            <person name="Hunter J.L."/>
            <person name="Jenkins J."/>
            <person name="Johnson-Hopson C."/>
            <person name="Khan S."/>
            <person name="Khaykin E."/>
            <person name="Kim C.J."/>
            <person name="Koo H.L."/>
            <person name="Kremenetskaia I."/>
            <person name="Kurtz D.B."/>
            <person name="Kwan A."/>
            <person name="Lam B."/>
            <person name="Langin-Hooper S."/>
            <person name="Lee A."/>
            <person name="Lee J.M."/>
            <person name="Lenz C.A."/>
            <person name="Li J.H."/>
            <person name="Li Y.-P."/>
            <person name="Lin X."/>
            <person name="Liu S.X."/>
            <person name="Liu Z.A."/>
            <person name="Luros J.S."/>
            <person name="Maiti R."/>
            <person name="Marziali A."/>
            <person name="Militscher J."/>
            <person name="Miranda M."/>
            <person name="Nguyen M."/>
            <person name="Nierman W.C."/>
            <person name="Osborne B.I."/>
            <person name="Pai G."/>
            <person name="Peterson J."/>
            <person name="Pham P.K."/>
            <person name="Rizzo M."/>
            <person name="Rooney T."/>
            <person name="Rowley D."/>
            <person name="Sakano H."/>
            <person name="Salzberg S.L."/>
            <person name="Schwartz J.R."/>
            <person name="Shinn P."/>
            <person name="Southwick A.M."/>
            <person name="Sun H."/>
            <person name="Tallon L.J."/>
            <person name="Tambunga G."/>
            <person name="Toriumi M.J."/>
            <person name="Town C.D."/>
            <person name="Utterback T."/>
            <person name="Van Aken S."/>
            <person name="Vaysberg M."/>
            <person name="Vysotskaia V.S."/>
            <person name="Walker M."/>
            <person name="Wu D."/>
            <person name="Yu G."/>
            <person name="Fraser C.M."/>
            <person name="Venter J.C."/>
            <person name="Davis R.W."/>
        </authorList>
    </citation>
    <scope>NUCLEOTIDE SEQUENCE [LARGE SCALE GENOMIC DNA]</scope>
    <source>
        <strain>cv. Columbia</strain>
    </source>
</reference>
<reference key="2">
    <citation type="journal article" date="2017" name="Plant J.">
        <title>Araport11: a complete reannotation of the Arabidopsis thaliana reference genome.</title>
        <authorList>
            <person name="Cheng C.Y."/>
            <person name="Krishnakumar V."/>
            <person name="Chan A.P."/>
            <person name="Thibaud-Nissen F."/>
            <person name="Schobel S."/>
            <person name="Town C.D."/>
        </authorList>
    </citation>
    <scope>GENOME REANNOTATION</scope>
    <source>
        <strain>cv. Columbia</strain>
    </source>
</reference>
<reference key="3">
    <citation type="journal article" date="2008" name="Trends Plant Sci.">
        <title>The plant B3 superfamily.</title>
        <authorList>
            <person name="Swaminathan K."/>
            <person name="Peterson K."/>
            <person name="Jack T."/>
        </authorList>
    </citation>
    <scope>GENE FAMILY</scope>
</reference>